<proteinExistence type="evidence at protein level"/>
<organism>
    <name type="scientific">Saccharomyces cerevisiae (strain ATCC 204508 / S288c)</name>
    <name type="common">Baker's yeast</name>
    <dbReference type="NCBI Taxonomy" id="559292"/>
    <lineage>
        <taxon>Eukaryota</taxon>
        <taxon>Fungi</taxon>
        <taxon>Dikarya</taxon>
        <taxon>Ascomycota</taxon>
        <taxon>Saccharomycotina</taxon>
        <taxon>Saccharomycetes</taxon>
        <taxon>Saccharomycetales</taxon>
        <taxon>Saccharomycetaceae</taxon>
        <taxon>Saccharomyces</taxon>
    </lineage>
</organism>
<feature type="chain" id="PRO_0000202783" description="Uncharacterized membrane protein YGR016W">
    <location>
        <begin position="1"/>
        <end position="190"/>
    </location>
</feature>
<feature type="topological domain" description="Cytoplasmic" evidence="1">
    <location>
        <begin position="1"/>
        <end position="55"/>
    </location>
</feature>
<feature type="transmembrane region" description="Helical" evidence="1">
    <location>
        <begin position="56"/>
        <end position="76"/>
    </location>
</feature>
<feature type="topological domain" description="Extracellular" evidence="1">
    <location>
        <begin position="77"/>
        <end position="80"/>
    </location>
</feature>
<feature type="transmembrane region" description="Helical" evidence="1">
    <location>
        <begin position="81"/>
        <end position="101"/>
    </location>
</feature>
<feature type="topological domain" description="Cytoplasmic" evidence="1">
    <location>
        <begin position="102"/>
        <end position="123"/>
    </location>
</feature>
<feature type="transmembrane region" description="Helical" evidence="1">
    <location>
        <begin position="124"/>
        <end position="144"/>
    </location>
</feature>
<feature type="topological domain" description="Extracellular" evidence="1">
    <location>
        <begin position="145"/>
        <end position="149"/>
    </location>
</feature>
<feature type="transmembrane region" description="Helical" evidence="1">
    <location>
        <begin position="150"/>
        <end position="170"/>
    </location>
</feature>
<feature type="topological domain" description="Cytoplasmic" evidence="1">
    <location>
        <begin position="171"/>
        <end position="190"/>
    </location>
</feature>
<accession>P53209</accession>
<accession>D6VUF2</accession>
<name>YG1A_YEAST</name>
<protein>
    <recommendedName>
        <fullName>Uncharacterized membrane protein YGR016W</fullName>
    </recommendedName>
</protein>
<gene>
    <name type="ordered locus">YGR016W</name>
</gene>
<keyword id="KW-0472">Membrane</keyword>
<keyword id="KW-1185">Reference proteome</keyword>
<keyword id="KW-0812">Transmembrane</keyword>
<keyword id="KW-1133">Transmembrane helix</keyword>
<evidence type="ECO:0000255" key="1"/>
<evidence type="ECO:0000269" key="2">
    <source>
    </source>
</evidence>
<dbReference type="EMBL" id="Z72801">
    <property type="protein sequence ID" value="CAA96999.1"/>
    <property type="molecule type" value="Genomic_DNA"/>
</dbReference>
<dbReference type="EMBL" id="BK006941">
    <property type="protein sequence ID" value="DAA08113.1"/>
    <property type="molecule type" value="Genomic_DNA"/>
</dbReference>
<dbReference type="PIR" id="S64307">
    <property type="entry name" value="S64307"/>
</dbReference>
<dbReference type="RefSeq" id="NP_011530.1">
    <property type="nucleotide sequence ID" value="NM_001181145.1"/>
</dbReference>
<dbReference type="SMR" id="P53209"/>
<dbReference type="BioGRID" id="33259">
    <property type="interactions" value="129"/>
</dbReference>
<dbReference type="DIP" id="DIP-5508N"/>
<dbReference type="FunCoup" id="P53209">
    <property type="interactions" value="62"/>
</dbReference>
<dbReference type="IntAct" id="P53209">
    <property type="interactions" value="27"/>
</dbReference>
<dbReference type="STRING" id="4932.YGR016W"/>
<dbReference type="iPTMnet" id="P53209"/>
<dbReference type="PaxDb" id="4932-YGR016W"/>
<dbReference type="PeptideAtlas" id="P53209"/>
<dbReference type="EnsemblFungi" id="YGR016W_mRNA">
    <property type="protein sequence ID" value="YGR016W"/>
    <property type="gene ID" value="YGR016W"/>
</dbReference>
<dbReference type="GeneID" id="852899"/>
<dbReference type="KEGG" id="sce:YGR016W"/>
<dbReference type="AGR" id="SGD:S000003248"/>
<dbReference type="SGD" id="S000003248">
    <property type="gene designation" value="YGR016W"/>
</dbReference>
<dbReference type="VEuPathDB" id="FungiDB:YGR016W"/>
<dbReference type="eggNOG" id="ENOG502S3VI">
    <property type="taxonomic scope" value="Eukaryota"/>
</dbReference>
<dbReference type="HOGENOM" id="CLU_119636_0_0_1"/>
<dbReference type="InParanoid" id="P53209"/>
<dbReference type="OMA" id="CINIRYD"/>
<dbReference type="OrthoDB" id="4074030at2759"/>
<dbReference type="BioCyc" id="YEAST:G3O-30743-MONOMER"/>
<dbReference type="BioGRID-ORCS" id="852899">
    <property type="hits" value="0 hits in 10 CRISPR screens"/>
</dbReference>
<dbReference type="PRO" id="PR:P53209"/>
<dbReference type="Proteomes" id="UP000002311">
    <property type="component" value="Chromosome VII"/>
</dbReference>
<dbReference type="RNAct" id="P53209">
    <property type="molecule type" value="protein"/>
</dbReference>
<dbReference type="GO" id="GO:0005783">
    <property type="term" value="C:endoplasmic reticulum"/>
    <property type="evidence" value="ECO:0007005"/>
    <property type="project" value="SGD"/>
</dbReference>
<dbReference type="GO" id="GO:0016020">
    <property type="term" value="C:membrane"/>
    <property type="evidence" value="ECO:0007669"/>
    <property type="project" value="UniProtKB-SubCell"/>
</dbReference>
<dbReference type="InterPro" id="IPR016564">
    <property type="entry name" value="UCP010056"/>
</dbReference>
<dbReference type="PANTHER" id="PTHR36784">
    <property type="entry name" value="HISTONE-LYSINE N-METHYLTRANSFERASE"/>
    <property type="match status" value="1"/>
</dbReference>
<dbReference type="PANTHER" id="PTHR36784:SF1">
    <property type="entry name" value="HISTONE-LYSINE N-METHYLTRANSFERASE"/>
    <property type="match status" value="1"/>
</dbReference>
<dbReference type="PIRSF" id="PIRSF010056">
    <property type="entry name" value="UCP010056"/>
    <property type="match status" value="1"/>
</dbReference>
<reference key="1">
    <citation type="journal article" date="1997" name="Yeast">
        <title>Sequence analysis of 203 kilobases from Saccharomyces cerevisiae chromosome VII.</title>
        <authorList>
            <person name="Rieger M."/>
            <person name="Brueckner M."/>
            <person name="Schaefer M."/>
            <person name="Mueller-Auer S."/>
        </authorList>
    </citation>
    <scope>NUCLEOTIDE SEQUENCE [GENOMIC DNA]</scope>
    <source>
        <strain>ATCC 204508 / S288c</strain>
    </source>
</reference>
<reference key="2">
    <citation type="journal article" date="1997" name="Nature">
        <title>The nucleotide sequence of Saccharomyces cerevisiae chromosome VII.</title>
        <authorList>
            <person name="Tettelin H."/>
            <person name="Agostoni-Carbone M.L."/>
            <person name="Albermann K."/>
            <person name="Albers M."/>
            <person name="Arroyo J."/>
            <person name="Backes U."/>
            <person name="Barreiros T."/>
            <person name="Bertani I."/>
            <person name="Bjourson A.J."/>
            <person name="Brueckner M."/>
            <person name="Bruschi C.V."/>
            <person name="Carignani G."/>
            <person name="Castagnoli L."/>
            <person name="Cerdan E."/>
            <person name="Clemente M.L."/>
            <person name="Coblenz A."/>
            <person name="Coglievina M."/>
            <person name="Coissac E."/>
            <person name="Defoor E."/>
            <person name="Del Bino S."/>
            <person name="Delius H."/>
            <person name="Delneri D."/>
            <person name="de Wergifosse P."/>
            <person name="Dujon B."/>
            <person name="Durand P."/>
            <person name="Entian K.-D."/>
            <person name="Eraso P."/>
            <person name="Escribano V."/>
            <person name="Fabiani L."/>
            <person name="Fartmann B."/>
            <person name="Feroli F."/>
            <person name="Feuermann M."/>
            <person name="Frontali L."/>
            <person name="Garcia-Gonzalez M."/>
            <person name="Garcia-Saez M.I."/>
            <person name="Goffeau A."/>
            <person name="Guerreiro P."/>
            <person name="Hani J."/>
            <person name="Hansen M."/>
            <person name="Hebling U."/>
            <person name="Hernandez K."/>
            <person name="Heumann K."/>
            <person name="Hilger F."/>
            <person name="Hofmann B."/>
            <person name="Indge K.J."/>
            <person name="James C.M."/>
            <person name="Klima R."/>
            <person name="Koetter P."/>
            <person name="Kramer B."/>
            <person name="Kramer W."/>
            <person name="Lauquin G."/>
            <person name="Leuther H."/>
            <person name="Louis E.J."/>
            <person name="Maillier E."/>
            <person name="Marconi A."/>
            <person name="Martegani E."/>
            <person name="Mazon M.J."/>
            <person name="Mazzoni C."/>
            <person name="McReynolds A.D.K."/>
            <person name="Melchioretto P."/>
            <person name="Mewes H.-W."/>
            <person name="Minenkova O."/>
            <person name="Mueller-Auer S."/>
            <person name="Nawrocki A."/>
            <person name="Netter P."/>
            <person name="Neu R."/>
            <person name="Nombela C."/>
            <person name="Oliver S.G."/>
            <person name="Panzeri L."/>
            <person name="Paoluzi S."/>
            <person name="Plevani P."/>
            <person name="Portetelle D."/>
            <person name="Portillo F."/>
            <person name="Potier S."/>
            <person name="Purnelle B."/>
            <person name="Rieger M."/>
            <person name="Riles L."/>
            <person name="Rinaldi T."/>
            <person name="Robben J."/>
            <person name="Rodrigues-Pousada C."/>
            <person name="Rodriguez-Belmonte E."/>
            <person name="Rodriguez-Torres A.M."/>
            <person name="Rose M."/>
            <person name="Ruzzi M."/>
            <person name="Saliola M."/>
            <person name="Sanchez-Perez M."/>
            <person name="Schaefer B."/>
            <person name="Schaefer M."/>
            <person name="Scharfe M."/>
            <person name="Schmidheini T."/>
            <person name="Schreer A."/>
            <person name="Skala J."/>
            <person name="Souciet J.-L."/>
            <person name="Steensma H.Y."/>
            <person name="Talla E."/>
            <person name="Thierry A."/>
            <person name="Vandenbol M."/>
            <person name="van der Aart Q.J.M."/>
            <person name="Van Dyck L."/>
            <person name="Vanoni M."/>
            <person name="Verhasselt P."/>
            <person name="Voet M."/>
            <person name="Volckaert G."/>
            <person name="Wambutt R."/>
            <person name="Watson M.D."/>
            <person name="Weber N."/>
            <person name="Wedler E."/>
            <person name="Wedler H."/>
            <person name="Wipfli P."/>
            <person name="Wolf K."/>
            <person name="Wright L.F."/>
            <person name="Zaccaria P."/>
            <person name="Zimmermann M."/>
            <person name="Zollner A."/>
            <person name="Kleine K."/>
        </authorList>
    </citation>
    <scope>NUCLEOTIDE SEQUENCE [LARGE SCALE GENOMIC DNA]</scope>
    <source>
        <strain>ATCC 204508 / S288c</strain>
    </source>
</reference>
<reference key="3">
    <citation type="journal article" date="2014" name="G3 (Bethesda)">
        <title>The reference genome sequence of Saccharomyces cerevisiae: Then and now.</title>
        <authorList>
            <person name="Engel S.R."/>
            <person name="Dietrich F.S."/>
            <person name="Fisk D.G."/>
            <person name="Binkley G."/>
            <person name="Balakrishnan R."/>
            <person name="Costanzo M.C."/>
            <person name="Dwight S.S."/>
            <person name="Hitz B.C."/>
            <person name="Karra K."/>
            <person name="Nash R.S."/>
            <person name="Weng S."/>
            <person name="Wong E.D."/>
            <person name="Lloyd P."/>
            <person name="Skrzypek M.S."/>
            <person name="Miyasato S.R."/>
            <person name="Simison M."/>
            <person name="Cherry J.M."/>
        </authorList>
    </citation>
    <scope>GENOME REANNOTATION</scope>
    <source>
        <strain>ATCC 204508 / S288c</strain>
    </source>
</reference>
<reference key="4">
    <citation type="journal article" date="2003" name="Nature">
        <title>Global analysis of protein expression in yeast.</title>
        <authorList>
            <person name="Ghaemmaghami S."/>
            <person name="Huh W.-K."/>
            <person name="Bower K."/>
            <person name="Howson R.W."/>
            <person name="Belle A."/>
            <person name="Dephoure N."/>
            <person name="O'Shea E.K."/>
            <person name="Weissman J.S."/>
        </authorList>
    </citation>
    <scope>LEVEL OF PROTEIN EXPRESSION [LARGE SCALE ANALYSIS]</scope>
</reference>
<reference key="5">
    <citation type="journal article" date="2006" name="Proc. Natl. Acad. Sci. U.S.A.">
        <title>A global topology map of the Saccharomyces cerevisiae membrane proteome.</title>
        <authorList>
            <person name="Kim H."/>
            <person name="Melen K."/>
            <person name="Oesterberg M."/>
            <person name="von Heijne G."/>
        </authorList>
    </citation>
    <scope>TOPOLOGY [LARGE SCALE ANALYSIS]</scope>
    <source>
        <strain>ATCC 208353 / W303-1A</strain>
    </source>
</reference>
<reference key="6">
    <citation type="journal article" date="2009" name="Science">
        <title>Global analysis of Cdk1 substrate phosphorylation sites provides insights into evolution.</title>
        <authorList>
            <person name="Holt L.J."/>
            <person name="Tuch B.B."/>
            <person name="Villen J."/>
            <person name="Johnson A.D."/>
            <person name="Gygi S.P."/>
            <person name="Morgan D.O."/>
        </authorList>
    </citation>
    <scope>IDENTIFICATION BY MASS SPECTROMETRY [LARGE SCALE ANALYSIS]</scope>
</reference>
<sequence length="190" mass="22226">MSRLRRFNRKILSLSSDYTHDGESDQEDVSILPLDTEEQEELIQKFETNAHITNKLYINLLSILYLLYGGLLMILVRKSRGYIKLALLAGANSLICSCITLRYDIVNDYLLFKKFKLRVSNFSINIINIILLVLMAWISFNHVVEDKKTVLCLQVPMFLFWVAVLVKRWARNIEDEIADLRCLKYKYKNA</sequence>
<comment type="subcellular location">
    <subcellularLocation>
        <location>Membrane</location>
        <topology>Multi-pass membrane protein</topology>
    </subcellularLocation>
</comment>
<comment type="miscellaneous">
    <text evidence="2">Present with 238 molecules/cell in log phase SD medium.</text>
</comment>